<protein>
    <recommendedName>
        <fullName evidence="1">NADH-quinone oxidoreductase subunit A</fullName>
        <ecNumber evidence="1">7.1.1.-</ecNumber>
    </recommendedName>
    <alternativeName>
        <fullName evidence="1">NADH dehydrogenase I subunit A</fullName>
    </alternativeName>
    <alternativeName>
        <fullName evidence="1">NDH-1 subunit A</fullName>
    </alternativeName>
    <alternativeName>
        <fullName evidence="1">NUO1</fullName>
    </alternativeName>
</protein>
<sequence>MNLAAYYPVLLFLLVGTGLGIALVSIGKILGPNKPDSEKNAPYECGFEAFEDARMKFDVRYYLVAILFIIFDLETAFLFPWGVALREIGWPGFIAMMIFLLEFLLGFAYIWKKGGLDWE</sequence>
<name>NUOA_BURPS</name>
<keyword id="KW-0997">Cell inner membrane</keyword>
<keyword id="KW-1003">Cell membrane</keyword>
<keyword id="KW-0472">Membrane</keyword>
<keyword id="KW-0520">NAD</keyword>
<keyword id="KW-0874">Quinone</keyword>
<keyword id="KW-1185">Reference proteome</keyword>
<keyword id="KW-1278">Translocase</keyword>
<keyword id="KW-0812">Transmembrane</keyword>
<keyword id="KW-1133">Transmembrane helix</keyword>
<keyword id="KW-0813">Transport</keyword>
<keyword id="KW-0830">Ubiquinone</keyword>
<comment type="function">
    <text evidence="1">NDH-1 shuttles electrons from NADH, via FMN and iron-sulfur (Fe-S) centers, to quinones in the respiratory chain. The immediate electron acceptor for the enzyme in this species is believed to be ubiquinone. Couples the redox reaction to proton translocation (for every two electrons transferred, four hydrogen ions are translocated across the cytoplasmic membrane), and thus conserves the redox energy in a proton gradient.</text>
</comment>
<comment type="catalytic activity">
    <reaction evidence="1">
        <text>a quinone + NADH + 5 H(+)(in) = a quinol + NAD(+) + 4 H(+)(out)</text>
        <dbReference type="Rhea" id="RHEA:57888"/>
        <dbReference type="ChEBI" id="CHEBI:15378"/>
        <dbReference type="ChEBI" id="CHEBI:24646"/>
        <dbReference type="ChEBI" id="CHEBI:57540"/>
        <dbReference type="ChEBI" id="CHEBI:57945"/>
        <dbReference type="ChEBI" id="CHEBI:132124"/>
    </reaction>
</comment>
<comment type="subunit">
    <text evidence="1">NDH-1 is composed of 14 different subunits. Subunits NuoA, H, J, K, L, M, N constitute the membrane sector of the complex.</text>
</comment>
<comment type="subcellular location">
    <subcellularLocation>
        <location evidence="1">Cell inner membrane</location>
        <topology evidence="1">Multi-pass membrane protein</topology>
    </subcellularLocation>
</comment>
<comment type="similarity">
    <text evidence="1">Belongs to the complex I subunit 3 family.</text>
</comment>
<proteinExistence type="inferred from homology"/>
<feature type="chain" id="PRO_0000362645" description="NADH-quinone oxidoreductase subunit A">
    <location>
        <begin position="1"/>
        <end position="119"/>
    </location>
</feature>
<feature type="transmembrane region" description="Helical" evidence="1">
    <location>
        <begin position="7"/>
        <end position="27"/>
    </location>
</feature>
<feature type="transmembrane region" description="Helical" evidence="1">
    <location>
        <begin position="63"/>
        <end position="83"/>
    </location>
</feature>
<feature type="transmembrane region" description="Helical" evidence="1">
    <location>
        <begin position="88"/>
        <end position="108"/>
    </location>
</feature>
<gene>
    <name evidence="1" type="primary">nuoA</name>
    <name type="ordered locus">BPSL1211</name>
</gene>
<evidence type="ECO:0000255" key="1">
    <source>
        <dbReference type="HAMAP-Rule" id="MF_01394"/>
    </source>
</evidence>
<accession>Q63VN3</accession>
<dbReference type="EC" id="7.1.1.-" evidence="1"/>
<dbReference type="EMBL" id="BX571965">
    <property type="protein sequence ID" value="CAH35206.1"/>
    <property type="molecule type" value="Genomic_DNA"/>
</dbReference>
<dbReference type="RefSeq" id="WP_004186624.1">
    <property type="nucleotide sequence ID" value="NZ_CP009538.1"/>
</dbReference>
<dbReference type="RefSeq" id="YP_107833.1">
    <property type="nucleotide sequence ID" value="NC_006350.1"/>
</dbReference>
<dbReference type="SMR" id="Q63VN3"/>
<dbReference type="STRING" id="272560.BPSL1211"/>
<dbReference type="KEGG" id="bps:BPSL1211"/>
<dbReference type="PATRIC" id="fig|272560.51.peg.315"/>
<dbReference type="eggNOG" id="COG0838">
    <property type="taxonomic scope" value="Bacteria"/>
</dbReference>
<dbReference type="Proteomes" id="UP000000605">
    <property type="component" value="Chromosome 1"/>
</dbReference>
<dbReference type="GO" id="GO:0030964">
    <property type="term" value="C:NADH dehydrogenase complex"/>
    <property type="evidence" value="ECO:0007669"/>
    <property type="project" value="TreeGrafter"/>
</dbReference>
<dbReference type="GO" id="GO:0005886">
    <property type="term" value="C:plasma membrane"/>
    <property type="evidence" value="ECO:0007669"/>
    <property type="project" value="UniProtKB-SubCell"/>
</dbReference>
<dbReference type="GO" id="GO:0008137">
    <property type="term" value="F:NADH dehydrogenase (ubiquinone) activity"/>
    <property type="evidence" value="ECO:0007669"/>
    <property type="project" value="InterPro"/>
</dbReference>
<dbReference type="GO" id="GO:0050136">
    <property type="term" value="F:NADH:ubiquinone reductase (non-electrogenic) activity"/>
    <property type="evidence" value="ECO:0007669"/>
    <property type="project" value="UniProtKB-UniRule"/>
</dbReference>
<dbReference type="GO" id="GO:0048038">
    <property type="term" value="F:quinone binding"/>
    <property type="evidence" value="ECO:0007669"/>
    <property type="project" value="UniProtKB-KW"/>
</dbReference>
<dbReference type="FunFam" id="1.20.58.1610:FF:000004">
    <property type="entry name" value="NADH-quinone oxidoreductase subunit A"/>
    <property type="match status" value="1"/>
</dbReference>
<dbReference type="Gene3D" id="1.20.58.1610">
    <property type="entry name" value="NADH:ubiquinone/plastoquinone oxidoreductase, chain 3"/>
    <property type="match status" value="1"/>
</dbReference>
<dbReference type="HAMAP" id="MF_01394">
    <property type="entry name" value="NDH1_NuoA"/>
    <property type="match status" value="1"/>
</dbReference>
<dbReference type="InterPro" id="IPR023043">
    <property type="entry name" value="NAD(P)H_OxRDtase_bac/plastid"/>
</dbReference>
<dbReference type="InterPro" id="IPR000440">
    <property type="entry name" value="NADH_UbQ/plastoQ_OxRdtase_su3"/>
</dbReference>
<dbReference type="InterPro" id="IPR038430">
    <property type="entry name" value="NDAH_ubi_oxred_su3_sf"/>
</dbReference>
<dbReference type="PANTHER" id="PTHR11058">
    <property type="entry name" value="NADH-UBIQUINONE OXIDOREDUCTASE CHAIN 3"/>
    <property type="match status" value="1"/>
</dbReference>
<dbReference type="PANTHER" id="PTHR11058:SF9">
    <property type="entry name" value="NADH-UBIQUINONE OXIDOREDUCTASE CHAIN 3"/>
    <property type="match status" value="1"/>
</dbReference>
<dbReference type="Pfam" id="PF00507">
    <property type="entry name" value="Oxidored_q4"/>
    <property type="match status" value="1"/>
</dbReference>
<reference key="1">
    <citation type="journal article" date="2004" name="Proc. Natl. Acad. Sci. U.S.A.">
        <title>Genomic plasticity of the causative agent of melioidosis, Burkholderia pseudomallei.</title>
        <authorList>
            <person name="Holden M.T.G."/>
            <person name="Titball R.W."/>
            <person name="Peacock S.J."/>
            <person name="Cerdeno-Tarraga A.-M."/>
            <person name="Atkins T."/>
            <person name="Crossman L.C."/>
            <person name="Pitt T."/>
            <person name="Churcher C."/>
            <person name="Mungall K.L."/>
            <person name="Bentley S.D."/>
            <person name="Sebaihia M."/>
            <person name="Thomson N.R."/>
            <person name="Bason N."/>
            <person name="Beacham I.R."/>
            <person name="Brooks K."/>
            <person name="Brown K.A."/>
            <person name="Brown N.F."/>
            <person name="Challis G.L."/>
            <person name="Cherevach I."/>
            <person name="Chillingworth T."/>
            <person name="Cronin A."/>
            <person name="Crossett B."/>
            <person name="Davis P."/>
            <person name="DeShazer D."/>
            <person name="Feltwell T."/>
            <person name="Fraser A."/>
            <person name="Hance Z."/>
            <person name="Hauser H."/>
            <person name="Holroyd S."/>
            <person name="Jagels K."/>
            <person name="Keith K.E."/>
            <person name="Maddison M."/>
            <person name="Moule S."/>
            <person name="Price C."/>
            <person name="Quail M.A."/>
            <person name="Rabbinowitsch E."/>
            <person name="Rutherford K."/>
            <person name="Sanders M."/>
            <person name="Simmonds M."/>
            <person name="Songsivilai S."/>
            <person name="Stevens K."/>
            <person name="Tumapa S."/>
            <person name="Vesaratchavest M."/>
            <person name="Whitehead S."/>
            <person name="Yeats C."/>
            <person name="Barrell B.G."/>
            <person name="Oyston P.C.F."/>
            <person name="Parkhill J."/>
        </authorList>
    </citation>
    <scope>NUCLEOTIDE SEQUENCE [LARGE SCALE GENOMIC DNA]</scope>
    <source>
        <strain>K96243</strain>
    </source>
</reference>
<organism>
    <name type="scientific">Burkholderia pseudomallei (strain K96243)</name>
    <dbReference type="NCBI Taxonomy" id="272560"/>
    <lineage>
        <taxon>Bacteria</taxon>
        <taxon>Pseudomonadati</taxon>
        <taxon>Pseudomonadota</taxon>
        <taxon>Betaproteobacteria</taxon>
        <taxon>Burkholderiales</taxon>
        <taxon>Burkholderiaceae</taxon>
        <taxon>Burkholderia</taxon>
        <taxon>pseudomallei group</taxon>
    </lineage>
</organism>